<gene>
    <name type="ordered locus">lmo1502</name>
</gene>
<keyword id="KW-0963">Cytoplasm</keyword>
<keyword id="KW-0378">Hydrolase</keyword>
<keyword id="KW-0540">Nuclease</keyword>
<keyword id="KW-1185">Reference proteome</keyword>
<keyword id="KW-0690">Ribosome biogenesis</keyword>
<dbReference type="EC" id="3.1.-.-" evidence="1"/>
<dbReference type="EMBL" id="AL591979">
    <property type="protein sequence ID" value="CAC99580.1"/>
    <property type="molecule type" value="Genomic_DNA"/>
</dbReference>
<dbReference type="PIR" id="AF1262">
    <property type="entry name" value="AF1262"/>
</dbReference>
<dbReference type="RefSeq" id="NP_465027.1">
    <property type="nucleotide sequence ID" value="NC_003210.1"/>
</dbReference>
<dbReference type="SMR" id="Q8Y723"/>
<dbReference type="STRING" id="169963.gene:17594159"/>
<dbReference type="PaxDb" id="169963-lmo1502"/>
<dbReference type="EnsemblBacteria" id="CAC99580">
    <property type="protein sequence ID" value="CAC99580"/>
    <property type="gene ID" value="CAC99580"/>
</dbReference>
<dbReference type="GeneID" id="986975"/>
<dbReference type="KEGG" id="lmo:lmo1502"/>
<dbReference type="PATRIC" id="fig|169963.11.peg.1543"/>
<dbReference type="eggNOG" id="COG0816">
    <property type="taxonomic scope" value="Bacteria"/>
</dbReference>
<dbReference type="HOGENOM" id="CLU_098240_2_0_9"/>
<dbReference type="OrthoDB" id="9796140at2"/>
<dbReference type="PhylomeDB" id="Q8Y723"/>
<dbReference type="BioCyc" id="LMON169963:LMO1502-MONOMER"/>
<dbReference type="Proteomes" id="UP000000817">
    <property type="component" value="Chromosome"/>
</dbReference>
<dbReference type="GO" id="GO:0005737">
    <property type="term" value="C:cytoplasm"/>
    <property type="evidence" value="ECO:0007669"/>
    <property type="project" value="UniProtKB-SubCell"/>
</dbReference>
<dbReference type="GO" id="GO:0004518">
    <property type="term" value="F:nuclease activity"/>
    <property type="evidence" value="ECO:0007669"/>
    <property type="project" value="UniProtKB-KW"/>
</dbReference>
<dbReference type="GO" id="GO:0000967">
    <property type="term" value="P:rRNA 5'-end processing"/>
    <property type="evidence" value="ECO:0000318"/>
    <property type="project" value="GO_Central"/>
</dbReference>
<dbReference type="CDD" id="cd16964">
    <property type="entry name" value="YqgF"/>
    <property type="match status" value="1"/>
</dbReference>
<dbReference type="FunFam" id="3.30.420.140:FF:000003">
    <property type="entry name" value="Putative pre-16S rRNA nuclease"/>
    <property type="match status" value="1"/>
</dbReference>
<dbReference type="Gene3D" id="3.30.420.140">
    <property type="entry name" value="YqgF/RNase H-like domain"/>
    <property type="match status" value="1"/>
</dbReference>
<dbReference type="HAMAP" id="MF_00651">
    <property type="entry name" value="Nuclease_YqgF"/>
    <property type="match status" value="1"/>
</dbReference>
<dbReference type="InterPro" id="IPR012337">
    <property type="entry name" value="RNaseH-like_sf"/>
</dbReference>
<dbReference type="InterPro" id="IPR005227">
    <property type="entry name" value="YqgF"/>
</dbReference>
<dbReference type="InterPro" id="IPR006641">
    <property type="entry name" value="YqgF/RNaseH-like_dom"/>
</dbReference>
<dbReference type="InterPro" id="IPR037027">
    <property type="entry name" value="YqgF/RNaseH-like_dom_sf"/>
</dbReference>
<dbReference type="NCBIfam" id="TIGR00250">
    <property type="entry name" value="RNAse_H_YqgF"/>
    <property type="match status" value="1"/>
</dbReference>
<dbReference type="PANTHER" id="PTHR33317">
    <property type="entry name" value="POLYNUCLEOTIDYL TRANSFERASE, RIBONUCLEASE H-LIKE SUPERFAMILY PROTEIN"/>
    <property type="match status" value="1"/>
</dbReference>
<dbReference type="PANTHER" id="PTHR33317:SF4">
    <property type="entry name" value="POLYNUCLEOTIDYL TRANSFERASE, RIBONUCLEASE H-LIKE SUPERFAMILY PROTEIN"/>
    <property type="match status" value="1"/>
</dbReference>
<dbReference type="Pfam" id="PF03652">
    <property type="entry name" value="RuvX"/>
    <property type="match status" value="1"/>
</dbReference>
<dbReference type="SMART" id="SM00732">
    <property type="entry name" value="YqgFc"/>
    <property type="match status" value="1"/>
</dbReference>
<dbReference type="SUPFAM" id="SSF53098">
    <property type="entry name" value="Ribonuclease H-like"/>
    <property type="match status" value="1"/>
</dbReference>
<name>YQGF_LISMO</name>
<accession>Q8Y723</accession>
<comment type="function">
    <text evidence="1">Could be a nuclease involved in processing of the 5'-end of pre-16S rRNA.</text>
</comment>
<comment type="subcellular location">
    <subcellularLocation>
        <location evidence="1">Cytoplasm</location>
    </subcellularLocation>
</comment>
<comment type="similarity">
    <text evidence="1">Belongs to the YqgF nuclease family.</text>
</comment>
<sequence>MRIMGLDVGSKTVGVAISDPLGWTAQGVETIQIDENRKQFGYDRVKELVLEYEVEKVVVGLPKNMNNTIGPRAESSKIYAEVLEARIGLPVVLWDERLTTSAAERTLIEADVSRKKRKEVIDKLAAVMILQSYLDTTN</sequence>
<feature type="chain" id="PRO_0000172086" description="Putative pre-16S rRNA nuclease">
    <location>
        <begin position="1"/>
        <end position="138"/>
    </location>
</feature>
<reference key="1">
    <citation type="journal article" date="2001" name="Science">
        <title>Comparative genomics of Listeria species.</title>
        <authorList>
            <person name="Glaser P."/>
            <person name="Frangeul L."/>
            <person name="Buchrieser C."/>
            <person name="Rusniok C."/>
            <person name="Amend A."/>
            <person name="Baquero F."/>
            <person name="Berche P."/>
            <person name="Bloecker H."/>
            <person name="Brandt P."/>
            <person name="Chakraborty T."/>
            <person name="Charbit A."/>
            <person name="Chetouani F."/>
            <person name="Couve E."/>
            <person name="de Daruvar A."/>
            <person name="Dehoux P."/>
            <person name="Domann E."/>
            <person name="Dominguez-Bernal G."/>
            <person name="Duchaud E."/>
            <person name="Durant L."/>
            <person name="Dussurget O."/>
            <person name="Entian K.-D."/>
            <person name="Fsihi H."/>
            <person name="Garcia-del Portillo F."/>
            <person name="Garrido P."/>
            <person name="Gautier L."/>
            <person name="Goebel W."/>
            <person name="Gomez-Lopez N."/>
            <person name="Hain T."/>
            <person name="Hauf J."/>
            <person name="Jackson D."/>
            <person name="Jones L.-M."/>
            <person name="Kaerst U."/>
            <person name="Kreft J."/>
            <person name="Kuhn M."/>
            <person name="Kunst F."/>
            <person name="Kurapkat G."/>
            <person name="Madueno E."/>
            <person name="Maitournam A."/>
            <person name="Mata Vicente J."/>
            <person name="Ng E."/>
            <person name="Nedjari H."/>
            <person name="Nordsiek G."/>
            <person name="Novella S."/>
            <person name="de Pablos B."/>
            <person name="Perez-Diaz J.-C."/>
            <person name="Purcell R."/>
            <person name="Remmel B."/>
            <person name="Rose M."/>
            <person name="Schlueter T."/>
            <person name="Simoes N."/>
            <person name="Tierrez A."/>
            <person name="Vazquez-Boland J.-A."/>
            <person name="Voss H."/>
            <person name="Wehland J."/>
            <person name="Cossart P."/>
        </authorList>
    </citation>
    <scope>NUCLEOTIDE SEQUENCE [LARGE SCALE GENOMIC DNA]</scope>
    <source>
        <strain>ATCC BAA-679 / EGD-e</strain>
    </source>
</reference>
<evidence type="ECO:0000255" key="1">
    <source>
        <dbReference type="HAMAP-Rule" id="MF_00651"/>
    </source>
</evidence>
<organism>
    <name type="scientific">Listeria monocytogenes serovar 1/2a (strain ATCC BAA-679 / EGD-e)</name>
    <dbReference type="NCBI Taxonomy" id="169963"/>
    <lineage>
        <taxon>Bacteria</taxon>
        <taxon>Bacillati</taxon>
        <taxon>Bacillota</taxon>
        <taxon>Bacilli</taxon>
        <taxon>Bacillales</taxon>
        <taxon>Listeriaceae</taxon>
        <taxon>Listeria</taxon>
    </lineage>
</organism>
<proteinExistence type="inferred from homology"/>
<protein>
    <recommendedName>
        <fullName evidence="1">Putative pre-16S rRNA nuclease</fullName>
        <ecNumber evidence="1">3.1.-.-</ecNumber>
    </recommendedName>
</protein>